<feature type="chain" id="PRO_0000409253" description="Pheromone-regulated membrane protein 10">
    <location>
        <begin position="1"/>
        <end position="1008"/>
    </location>
</feature>
<feature type="transmembrane region" description="Helical" evidence="1">
    <location>
        <begin position="683"/>
        <end position="703"/>
    </location>
</feature>
<feature type="transmembrane region" description="Helical" evidence="1">
    <location>
        <begin position="707"/>
        <end position="727"/>
    </location>
</feature>
<feature type="transmembrane region" description="Helical" evidence="1">
    <location>
        <begin position="736"/>
        <end position="756"/>
    </location>
</feature>
<feature type="transmembrane region" description="Helical" evidence="1">
    <location>
        <begin position="762"/>
        <end position="782"/>
    </location>
</feature>
<feature type="transmembrane region" description="Helical" evidence="1">
    <location>
        <begin position="800"/>
        <end position="820"/>
    </location>
</feature>
<feature type="transmembrane region" description="Helical" evidence="1">
    <location>
        <begin position="838"/>
        <end position="858"/>
    </location>
</feature>
<feature type="transmembrane region" description="Helical" evidence="1">
    <location>
        <begin position="866"/>
        <end position="886"/>
    </location>
</feature>
<feature type="transmembrane region" description="Helical" evidence="1">
    <location>
        <begin position="892"/>
        <end position="912"/>
    </location>
</feature>
<feature type="transmembrane region" description="Helical" evidence="1">
    <location>
        <begin position="917"/>
        <end position="937"/>
    </location>
</feature>
<feature type="transmembrane region" description="Helical" evidence="1">
    <location>
        <begin position="978"/>
        <end position="998"/>
    </location>
</feature>
<feature type="region of interest" description="Disordered" evidence="2">
    <location>
        <begin position="1"/>
        <end position="273"/>
    </location>
</feature>
<feature type="region of interest" description="Disordered" evidence="2">
    <location>
        <begin position="342"/>
        <end position="384"/>
    </location>
</feature>
<feature type="region of interest" description="Disordered" evidence="2">
    <location>
        <begin position="477"/>
        <end position="506"/>
    </location>
</feature>
<feature type="compositionally biased region" description="Low complexity" evidence="2">
    <location>
        <begin position="70"/>
        <end position="85"/>
    </location>
</feature>
<feature type="compositionally biased region" description="Polar residues" evidence="2">
    <location>
        <begin position="95"/>
        <end position="111"/>
    </location>
</feature>
<feature type="compositionally biased region" description="Acidic residues" evidence="2">
    <location>
        <begin position="116"/>
        <end position="132"/>
    </location>
</feature>
<feature type="compositionally biased region" description="Acidic residues" evidence="2">
    <location>
        <begin position="143"/>
        <end position="161"/>
    </location>
</feature>
<feature type="compositionally biased region" description="Basic and acidic residues" evidence="2">
    <location>
        <begin position="162"/>
        <end position="186"/>
    </location>
</feature>
<feature type="compositionally biased region" description="Polar residues" evidence="2">
    <location>
        <begin position="188"/>
        <end position="204"/>
    </location>
</feature>
<feature type="compositionally biased region" description="Basic and acidic residues" evidence="2">
    <location>
        <begin position="205"/>
        <end position="214"/>
    </location>
</feature>
<feature type="compositionally biased region" description="Low complexity" evidence="2">
    <location>
        <begin position="215"/>
        <end position="225"/>
    </location>
</feature>
<feature type="compositionally biased region" description="Basic and acidic residues" evidence="2">
    <location>
        <begin position="226"/>
        <end position="239"/>
    </location>
</feature>
<feature type="compositionally biased region" description="Polar residues" evidence="2">
    <location>
        <begin position="346"/>
        <end position="364"/>
    </location>
</feature>
<feature type="compositionally biased region" description="Basic residues" evidence="2">
    <location>
        <begin position="483"/>
        <end position="498"/>
    </location>
</feature>
<proteinExistence type="inferred from homology"/>
<organism>
    <name type="scientific">Debaryomyces hansenii (strain ATCC 36239 / CBS 767 / BCRC 21394 / JCM 1990 / NBRC 0083 / IGC 2968)</name>
    <name type="common">Yeast</name>
    <name type="synonym">Torulaspora hansenii</name>
    <dbReference type="NCBI Taxonomy" id="284592"/>
    <lineage>
        <taxon>Eukaryota</taxon>
        <taxon>Fungi</taxon>
        <taxon>Dikarya</taxon>
        <taxon>Ascomycota</taxon>
        <taxon>Saccharomycotina</taxon>
        <taxon>Pichiomycetes</taxon>
        <taxon>Debaryomycetaceae</taxon>
        <taxon>Debaryomyces</taxon>
    </lineage>
</organism>
<accession>Q6BVE3</accession>
<sequence length="1008" mass="110908">MSQSFPRNDTSSSSEDETDNYRSHIQIPSLDLANYRKQQKSTSKTNLAKAGKKLKNNKSVRFPDSYSPRDTIISNASTTNNSSSDSELEQDMVTGENSNLPNFNFSANQVHSPEYANEDDANDDSGEEEDTFEPPADFYASEGSDEDMEADNEGDNVEDKEEVVNEKEEIADDLHSKSSKTSRESKSFNAGTKNSRRSLNSLQRNETDVTDQLKRTTSTTSSSKRSNSDKRTGFKDILRKFALVDQQYPEAPSNRESEDLGEPQPSRSDTFLGNVLSMAGESGGLVPGATHFSREKTIDEEEEVGFEDEDSDLIEMKKLDFAQLSNEAQNLISTHVPDLANKLPEGTSSDQQLDYSDTSASNLIKNDEETGNEATKKDDEFYTPNPDYFIRGDINNENDADDYLMLDEHMDDIAPPKRVQAGVLSSLLKLYQNPQEQQSSSSLTSKSTYGGNTLADDSNYSYSDPKAASTLDFTKLKNDFKNGPKRMANKIPGRKHGAQKQDTQDESAQKYYDEDGNEIAAPNLPSFHNAKPKAPKKIAAAGKVPSKVHKKLKEHKRQQDQQLRITVHIADILHRQRFIMRMCKALMMFGAPTHRLEEYMTLTSRVLEIDGQFVYFPGCMIVSFGDASTRTSEVHLVRCAQGLNLSKLSDTHRIYKGVIHDILPVDEASTQLEELLKKKNRYSPWLCVFLYGLGSSMVCPFAFNGGWYDVPIAFGVGLCVGYLQFFVSSKSNLYSSVFEVTASIVVTFIARAIGSIHDGEYFCFSAIAQGSLALILPGYIILTGSLELQSRNIVAGSVRMFYAIIYSLFLGFGITLGASLYGWVDSNAISTTKCKNSIKQDEFKILFVPLFSACLGLINQARWRQLPIMIVIACAGYVGTFFAGKHKQFSEVTEFTACIGAFIVGILGNLYSRIGKGMAVAAMLPAIFVQVPSGIASQSTLLAGVESADKLTSSNSTTTDTSTASDSAGSLAFGATMVKVSIGISVGLFASALFVYPFGKKKTGLFSL</sequence>
<comment type="subcellular location">
    <subcellularLocation>
        <location>Membrane</location>
        <topology>Multi-pass membrane protein</topology>
    </subcellularLocation>
</comment>
<comment type="similarity">
    <text evidence="3">Belongs to the ThrE exporter (TC 2.A.79) family.</text>
</comment>
<protein>
    <recommendedName>
        <fullName>Pheromone-regulated membrane protein 10</fullName>
    </recommendedName>
</protein>
<gene>
    <name type="ordered locus">DEHA2C03278g</name>
</gene>
<keyword id="KW-0472">Membrane</keyword>
<keyword id="KW-1185">Reference proteome</keyword>
<keyword id="KW-0812">Transmembrane</keyword>
<keyword id="KW-1133">Transmembrane helix</keyword>
<dbReference type="EMBL" id="CR382135">
    <property type="protein sequence ID" value="CAG85871.2"/>
    <property type="molecule type" value="Genomic_DNA"/>
</dbReference>
<dbReference type="RefSeq" id="XP_457826.2">
    <property type="nucleotide sequence ID" value="XM_457826.1"/>
</dbReference>
<dbReference type="GeneID" id="2900144"/>
<dbReference type="KEGG" id="dha:DEHA2C03278g"/>
<dbReference type="VEuPathDB" id="FungiDB:DEHA2C03278g"/>
<dbReference type="eggNOG" id="ENOG502QPMM">
    <property type="taxonomic scope" value="Eukaryota"/>
</dbReference>
<dbReference type="HOGENOM" id="CLU_007078_1_0_1"/>
<dbReference type="InParanoid" id="Q6BVE3"/>
<dbReference type="OMA" id="FVYFPGT"/>
<dbReference type="OrthoDB" id="413008at2759"/>
<dbReference type="Proteomes" id="UP000000599">
    <property type="component" value="Chromosome C"/>
</dbReference>
<dbReference type="GO" id="GO:0016020">
    <property type="term" value="C:membrane"/>
    <property type="evidence" value="ECO:0007669"/>
    <property type="project" value="UniProtKB-SubCell"/>
</dbReference>
<dbReference type="GO" id="GO:0022857">
    <property type="term" value="F:transmembrane transporter activity"/>
    <property type="evidence" value="ECO:0007669"/>
    <property type="project" value="InterPro"/>
</dbReference>
<dbReference type="InterPro" id="IPR010619">
    <property type="entry name" value="ThrE-like_N"/>
</dbReference>
<dbReference type="InterPro" id="IPR051361">
    <property type="entry name" value="ThrE/Ser_Exporter"/>
</dbReference>
<dbReference type="InterPro" id="IPR024528">
    <property type="entry name" value="ThrE_2"/>
</dbReference>
<dbReference type="PANTHER" id="PTHR31082">
    <property type="entry name" value="PHEROMONE-REGULATED MEMBRANE PROTEIN 10"/>
    <property type="match status" value="1"/>
</dbReference>
<dbReference type="PANTHER" id="PTHR31082:SF4">
    <property type="entry name" value="PHEROMONE-REGULATED MEMBRANE PROTEIN 10"/>
    <property type="match status" value="1"/>
</dbReference>
<dbReference type="Pfam" id="PF06738">
    <property type="entry name" value="ThrE"/>
    <property type="match status" value="1"/>
</dbReference>
<dbReference type="Pfam" id="PF12821">
    <property type="entry name" value="ThrE_2"/>
    <property type="match status" value="1"/>
</dbReference>
<evidence type="ECO:0000255" key="1"/>
<evidence type="ECO:0000256" key="2">
    <source>
        <dbReference type="SAM" id="MobiDB-lite"/>
    </source>
</evidence>
<evidence type="ECO:0000305" key="3"/>
<name>PRM10_DEBHA</name>
<reference key="1">
    <citation type="journal article" date="2004" name="Nature">
        <title>Genome evolution in yeasts.</title>
        <authorList>
            <person name="Dujon B."/>
            <person name="Sherman D."/>
            <person name="Fischer G."/>
            <person name="Durrens P."/>
            <person name="Casaregola S."/>
            <person name="Lafontaine I."/>
            <person name="de Montigny J."/>
            <person name="Marck C."/>
            <person name="Neuveglise C."/>
            <person name="Talla E."/>
            <person name="Goffard N."/>
            <person name="Frangeul L."/>
            <person name="Aigle M."/>
            <person name="Anthouard V."/>
            <person name="Babour A."/>
            <person name="Barbe V."/>
            <person name="Barnay S."/>
            <person name="Blanchin S."/>
            <person name="Beckerich J.-M."/>
            <person name="Beyne E."/>
            <person name="Bleykasten C."/>
            <person name="Boisrame A."/>
            <person name="Boyer J."/>
            <person name="Cattolico L."/>
            <person name="Confanioleri F."/>
            <person name="de Daruvar A."/>
            <person name="Despons L."/>
            <person name="Fabre E."/>
            <person name="Fairhead C."/>
            <person name="Ferry-Dumazet H."/>
            <person name="Groppi A."/>
            <person name="Hantraye F."/>
            <person name="Hennequin C."/>
            <person name="Jauniaux N."/>
            <person name="Joyet P."/>
            <person name="Kachouri R."/>
            <person name="Kerrest A."/>
            <person name="Koszul R."/>
            <person name="Lemaire M."/>
            <person name="Lesur I."/>
            <person name="Ma L."/>
            <person name="Muller H."/>
            <person name="Nicaud J.-M."/>
            <person name="Nikolski M."/>
            <person name="Oztas S."/>
            <person name="Ozier-Kalogeropoulos O."/>
            <person name="Pellenz S."/>
            <person name="Potier S."/>
            <person name="Richard G.-F."/>
            <person name="Straub M.-L."/>
            <person name="Suleau A."/>
            <person name="Swennen D."/>
            <person name="Tekaia F."/>
            <person name="Wesolowski-Louvel M."/>
            <person name="Westhof E."/>
            <person name="Wirth B."/>
            <person name="Zeniou-Meyer M."/>
            <person name="Zivanovic Y."/>
            <person name="Bolotin-Fukuhara M."/>
            <person name="Thierry A."/>
            <person name="Bouchier C."/>
            <person name="Caudron B."/>
            <person name="Scarpelli C."/>
            <person name="Gaillardin C."/>
            <person name="Weissenbach J."/>
            <person name="Wincker P."/>
            <person name="Souciet J.-L."/>
        </authorList>
    </citation>
    <scope>NUCLEOTIDE SEQUENCE [LARGE SCALE GENOMIC DNA]</scope>
    <source>
        <strain>ATCC 36239 / CBS 767 / BCRC 21394 / JCM 1990 / NBRC 0083 / IGC 2968</strain>
    </source>
</reference>